<accession>Q5K2K3</accession>
<feature type="chain" id="PRO_0000287260" description="RNA-directed RNA polymerase L">
    <location>
        <begin position="1"/>
        <end position="2093"/>
    </location>
</feature>
<feature type="domain" description="RdRp catalytic" evidence="4">
    <location>
        <begin position="587"/>
        <end position="773"/>
    </location>
</feature>
<feature type="domain" description="Mononegavirus-type SAM-dependent 2'-O-MTase" evidence="5">
    <location>
        <begin position="1629"/>
        <end position="1826"/>
    </location>
</feature>
<feature type="region of interest" description="Disordered" evidence="6">
    <location>
        <begin position="1"/>
        <end position="23"/>
    </location>
</feature>
<feature type="region of interest" description="Capping domain" evidence="1">
    <location>
        <begin position="856"/>
        <end position="1324"/>
    </location>
</feature>
<feature type="region of interest" description="PRNTase domain" evidence="1">
    <location>
        <begin position="1071"/>
        <end position="1321"/>
    </location>
</feature>
<feature type="region of interest" description="priming-capping loop" evidence="1">
    <location>
        <begin position="1142"/>
        <end position="1179"/>
    </location>
</feature>
<feature type="region of interest" description="Connector domain" evidence="1">
    <location>
        <begin position="1348"/>
        <end position="1547"/>
    </location>
</feature>
<feature type="compositionally biased region" description="Basic and acidic residues" evidence="6">
    <location>
        <begin position="1"/>
        <end position="11"/>
    </location>
</feature>
<feature type="binding site" evidence="3">
    <location>
        <begin position="1656"/>
        <end position="1665"/>
    </location>
    <ligand>
        <name>ATP</name>
        <dbReference type="ChEBI" id="CHEBI:30616"/>
    </ligand>
</feature>
<feature type="site" description="Interaction with the phosphoprotein" evidence="1">
    <location>
        <position position="693"/>
    </location>
</feature>
<feature type="site" description="Important for escaping from the 3'-terminal leader promotter followed by the formation of a stable leaderRNA elongation complex" evidence="1">
    <location>
        <position position="1173"/>
    </location>
</feature>
<feature type="site" description="Interaction with the phosphoprotein" evidence="1">
    <location>
        <position position="1409"/>
    </location>
</feature>
<feature type="site" description="Interaction with the phosphoprotein" evidence="1">
    <location>
        <position position="1417"/>
    </location>
</feature>
<feature type="site" description="Interaction with the phosphoprotein" evidence="1">
    <location>
        <position position="1486"/>
    </location>
</feature>
<feature type="site" description="Interaction with the phosphoprotein" evidence="1">
    <location>
        <position position="1900"/>
    </location>
</feature>
<feature type="site" description="Interaction with the phosphoprotein" evidence="1">
    <location>
        <position position="1970"/>
    </location>
</feature>
<feature type="site" description="Interaction with the phosphoprotein" evidence="1">
    <location>
        <position position="2008"/>
    </location>
</feature>
<organismHost>
    <name type="scientific">Gerbillinae</name>
    <name type="common">gerbils</name>
    <dbReference type="NCBI Taxonomy" id="10045"/>
</organismHost>
<organismHost>
    <name type="scientific">Homo sapiens</name>
    <name type="common">Human</name>
    <dbReference type="NCBI Taxonomy" id="9606"/>
</organismHost>
<organismHost>
    <name type="scientific">Phlebotomus papatasi</name>
    <name type="common">Sandfly</name>
    <dbReference type="NCBI Taxonomy" id="29031"/>
</organismHost>
<sequence>MDEYSEEKWGDSDEESFGTGKYSDESRIRGLNSVDYNLNSPLIQDDLYYLMERVRGRPVPPIWKAKNWTETIHLVQESRLDYLPTQKLHSWYAEWLMEESHDSSQGLAFLKEVDKDSLETYEVVMSFLRGWCGGAPAYKKKEGRHIAKIGSLCQKFLDLHRVILIMNASTQMELSNLAETFQASSVSKKIITTPSMGKMEMSGQFALAYQQKVILDRNFLLMMKDVVIGRMQTLLSMVSRTDDKFSDGDISYLIKIYQLGDKIIQSLGNDGYELIKTIEPMCNLRLSDLAREYRPLIPEFPHFRQHIEGTVSELRKKTALIVDMFKMIDRTPGVDITLVIYGSFRHWGHPFIDYFAGLTKLNSQVTMGKQIDDEYVACLASDLARIVLTKEFNEKKRWSVNYNLVPQDHPFHEHIRDNTWPTPAVIQDFGDKWHELPLTQCFEIPDLIDPSIIYSDKSHSMNRQDVLNHVKRKPDQPIPSRKVLQTMIDTPATNWLEFLEEIDKNGLSDDDLVIGLKGKERELKIAGRFFSLMSWKLREYFVITEYLIKTHFVPLFHGLTMADDMTAVIKKMLESSSGQGLKDYSAVCIANHIDYEKWNNHQRKRSNEPIFKVMGQFLGFPNLISRTHEFFEKSLIYYNGRPDLMKVQDGRLVNTTKQLVCWEGQAGGLEGLRQKGWSILNLLVIQRESKIRNTAVKVLAQGDNQVICTQYKTKQHRNETELRSALTQMKLNNDAVMKAIESGTNKLGLLINQDETMQSADYLNYGKVPIFRGVIRGLETKRWSRVTCVTNDQLPTCANLMSSVSTNALTVAHFDVTPLNAMIQYNYFGNFSRLLLNMHDPAVRCSLFQLSQKHKIDLFSFEFKVGVLYLDPSIGGVCGTALSRFLIRGFPDPVTESISFWKVIYNNTQDNRLKKLCTAFGNPKIAQFRYSHIEKLLEDPTSLNISMGMSAANLLKSEIKKNLLRKRRTIGNSIVRDAVTYIHSEDEKIRSYLWSINPLFPRFLSEFKSGTFMGVASSVVSLFQNSRTIRNVFKDYMSSAIDELITKSEVNSLEHLCKYKGVRNFDQVWKCSASQADYLRRLSWGRKVLGTTIPHPLEMLGAGTIKNNSSTCCEHSGQDYISVFCPKGISNVLIERGPMAAYLGSKTSESTSILQPWEKESKIPIIKRATRLRDAIHWFVEPSSNLAKSILQNITALTGEEWGSSLEGFKRTGSALHRFTTSRMSHGGFCAQSPAALTRMMATTDTMSDYAKDNYDFMFQACLLFSQITTSVLLLETTISNTVHFHTRCINCVRKIEEPWLESPSVLQSKDVSNVLASWRNGGGSWGEQLHQLKPLKGDWEILTPAEKSYHVGRTLGFLFGDLTGQSSIRADDSSLFPLSIQKRLRGRGFLRGVLDGLVRASACQVIHRRSLTQLKRPANAVYGGLIFLIDKISASSTFINLCRDGPIREELSSIPHKIPTSYPTSNADLGLHIRNYFKFQCKSVELGKYQSDLEDLWLFSDLLSSGFAGPYALSSKVLKSLYKPSLSRRDRNNIRKLGALSRLLRSHENWSELHKEFLTSQLLLCQEEVRHACKFGIPKNVSAKSSMVWGKEAVSYVLDIPVEFTSQKQTKHLNACPRIQDPTISGLRLGQLPTGAHYKIRTILNAYNIKCRDVLCGGDGSGGMTAACLRYYSNSRAIFNSILEFDGSSMKGSSPDPPSALETVDQGMVRCVNATTCWENPSDLSQERTWDYFLHLKKSFNMKIDLIILDMEVRDFQISKLIEGNLRLKISKLLEKNGTLIYKTYGTIICSETSNVLTTLGPLFHSVYIVQTGYSSSFTSEVYVLFSKQKSFVDSPYVDWGSLQYNWEKLACFRNPRQEFKRALRIRSSRSLMGIPSSFLPDPLVNLETLLQISGVPSGVSHQLVTDVKSSGASGLSSAIGLLGLISHFTLDVTKLYVQEYRPPSDNRLIKMASAITGISYWISIAYHDQQLNQALTSVIKKSFPIRWGLINHRLHWSVSDRFHRSKDVRLSDCLAGIGNWIRGMELMKLPAGMFSHKEVNMILSKYIRGLNYHTISSRTGILEILKSQFSIIDRSLMTITTDNIQSSDWTD</sequence>
<gene>
    <name type="primary">L</name>
</gene>
<name>L_ISFV</name>
<comment type="function">
    <text evidence="1 2">Multifunctional enzyme responsible for RNA synthesis (replicase and transcriptase), cap addition, and cap methylation. Also performs the polyadenylation of subgenomic mRNAs by a stuttering mechanism at a slipery stop site present at the end of viral genes. The template is composed of the viral RNA tightly encapsidated by the nucleoprotein (N). L is packaged into virions during assembly and translocates to the 3' leader promoter to initiate transcription after entering the host cells. During transcription and replication of the genome, L does not bind the N-RNA complex directly, but is bridged by its non-catalytic cofactor P, which interacts with L and N oligomers simultaneously (By similarity). In the transcription mode, the polymerase performs the sequential transcription of all mRNAs using a termination-reinitiation mechanism responding to gene start and gene end signals. Some polymerase disengage from the template at each gene junction, resulting in a decreasing abundance of transcripts from the 3' to the 5' end of the genome (By similarity). The first gene is the most transcribed, and the last the least transcribed (By similarity). The viral phosphoprotein helps the polymerase to engage the N-RNA template and acts as a processivity factor. Polyribonucleotidyl transferase (PRNTase) adds the cap structure when the nascent RNA chain length has reached few nucleotides. Ribose 2'-O methylation of viral mRNA cap precedes and facilitates subsequent guanine-N-7 methylation, both activities being carried by the viral polymerase (By similarity). In the replication mode, the polymerase replicates the whole viral genome without recognizing the gene end transcriptional signals (By similarity). The ability of the polymerase to override the gene end signals as it is producing the antigenome is probably due to replicative RNA becoming encapsidated with nucleoprotein as it is synthesized (By similarity).</text>
</comment>
<comment type="catalytic activity">
    <reaction evidence="4">
        <text>RNA(n) + a ribonucleoside 5'-triphosphate = RNA(n+1) + diphosphate</text>
        <dbReference type="Rhea" id="RHEA:21248"/>
        <dbReference type="Rhea" id="RHEA-COMP:14527"/>
        <dbReference type="Rhea" id="RHEA-COMP:17342"/>
        <dbReference type="ChEBI" id="CHEBI:33019"/>
        <dbReference type="ChEBI" id="CHEBI:61557"/>
        <dbReference type="ChEBI" id="CHEBI:140395"/>
        <dbReference type="EC" id="2.7.7.48"/>
    </reaction>
</comment>
<comment type="catalytic activity">
    <reaction evidence="2">
        <text>GTP + H2O = GDP + phosphate + H(+)</text>
        <dbReference type="Rhea" id="RHEA:19669"/>
        <dbReference type="ChEBI" id="CHEBI:15377"/>
        <dbReference type="ChEBI" id="CHEBI:15378"/>
        <dbReference type="ChEBI" id="CHEBI:37565"/>
        <dbReference type="ChEBI" id="CHEBI:43474"/>
        <dbReference type="ChEBI" id="CHEBI:58189"/>
    </reaction>
</comment>
<comment type="catalytic activity">
    <reaction evidence="2">
        <text>a 5'-end triphospho-adenylyl-adenylyl-cytidylyl-adenosine in mRNA + GDP + H(+) = a 5'-end (5'-triphosphoguanosine)-adenylyl-adenylyl-cytidylyl-adenosine in mRNA + diphosphate</text>
        <dbReference type="Rhea" id="RHEA:65436"/>
        <dbReference type="Rhea" id="RHEA-COMP:16797"/>
        <dbReference type="Rhea" id="RHEA-COMP:16799"/>
        <dbReference type="ChEBI" id="CHEBI:15378"/>
        <dbReference type="ChEBI" id="CHEBI:33019"/>
        <dbReference type="ChEBI" id="CHEBI:58189"/>
        <dbReference type="ChEBI" id="CHEBI:156484"/>
        <dbReference type="ChEBI" id="CHEBI:156503"/>
        <dbReference type="EC" id="2.7.7.88"/>
    </reaction>
</comment>
<comment type="catalytic activity">
    <reaction evidence="1">
        <text>a 5'-end (5'-triphosphoguanosine)-adenylyl-adenylyl-cytidylyl-adenosine in mRNA + 2 S-adenosyl-L-methionine = a 5'-end (N(7)-methyl 5'-triphosphoguanosine)-(2'-O-methyladenylyl)-adenylyl-cytidylyl-adenosine in mRNA + 2 S-adenosyl-L-homocysteine + H(+)</text>
        <dbReference type="Rhea" id="RHEA:65376"/>
        <dbReference type="Rhea" id="RHEA-COMP:16797"/>
        <dbReference type="Rhea" id="RHEA-COMP:16798"/>
        <dbReference type="ChEBI" id="CHEBI:15378"/>
        <dbReference type="ChEBI" id="CHEBI:57856"/>
        <dbReference type="ChEBI" id="CHEBI:59789"/>
        <dbReference type="ChEBI" id="CHEBI:156483"/>
        <dbReference type="ChEBI" id="CHEBI:156484"/>
        <dbReference type="EC" id="2.1.1.375"/>
    </reaction>
</comment>
<comment type="catalytic activity">
    <reaction evidence="1">
        <text>a 5'-end (5'-triphosphoguanosine)-adenylyl-adenylyl-cytidylyl-adenosine in mRNA + S-adenosyl-L-methionine = a 5'-end (5'-triphosphoguanosine)-(2'-O-methyladenylyl)-adenylyl-cytidylyl-adenosine in mRNA + S-adenosyl-L-homocysteine + H(+)</text>
        <dbReference type="Rhea" id="RHEA:65380"/>
        <dbReference type="Rhea" id="RHEA-COMP:16797"/>
        <dbReference type="Rhea" id="RHEA-COMP:16801"/>
        <dbReference type="ChEBI" id="CHEBI:15378"/>
        <dbReference type="ChEBI" id="CHEBI:57856"/>
        <dbReference type="ChEBI" id="CHEBI:59789"/>
        <dbReference type="ChEBI" id="CHEBI:156482"/>
        <dbReference type="ChEBI" id="CHEBI:156484"/>
    </reaction>
</comment>
<comment type="catalytic activity">
    <reaction evidence="1">
        <text>a 5'-end (5'-triphosphoguanosine)-(2'-O-methyladenylyl)-adenylyl-cytidylyl-adenosine in mRNA + S-adenosyl-L-methionine = a 5'-end (N(7)-methyl 5'-triphosphoguanosine)-(2'-O-methyladenylyl)-adenylyl-cytidylyl-adenosine in mRNA + S-adenosyl-L-homocysteine</text>
        <dbReference type="Rhea" id="RHEA:65440"/>
        <dbReference type="Rhea" id="RHEA-COMP:16798"/>
        <dbReference type="Rhea" id="RHEA-COMP:16801"/>
        <dbReference type="ChEBI" id="CHEBI:57856"/>
        <dbReference type="ChEBI" id="CHEBI:59789"/>
        <dbReference type="ChEBI" id="CHEBI:156482"/>
        <dbReference type="ChEBI" id="CHEBI:156483"/>
    </reaction>
</comment>
<comment type="activity regulation">
    <text evidence="1">The GDP polyribonucleotidyltransferase activity is inhibited by the GDP analog DAPDP.</text>
</comment>
<comment type="subunit">
    <text evidence="1">May form homodimer. Interacts with the P protein; the association of P and L forms the polymerase complex, positions it on the template and allows to package the L polymerase in the virion, since P acts as a bridge between N and L. L binds loosely to N and is further bridged by the P protein, which interacts with L and N oligomers simultaneously.</text>
</comment>
<comment type="subcellular location">
    <subcellularLocation>
        <location evidence="1">Virion</location>
    </subcellularLocation>
    <subcellularLocation>
        <location evidence="1">Host cytoplasm</location>
    </subcellularLocation>
    <text evidence="1">L and P are packaged asymmetrically towards the blunt end of the virus. About 55 copies of L are present in the virion.</text>
</comment>
<comment type="domain">
    <text evidence="1">The RNA-dependent RNA polymerase (RdRp) domain is responsible for the RNA sythesis. The polyribonucleotidyl transferase (PRNTase) domain is responsible for the initiation of transcription at the 3'-end of the genome (priming) and pre-mRNA 5'-capping during start-stop transcription. The methyltransferase (MTase) domain is responsible for the cap methylation.</text>
</comment>
<comment type="similarity">
    <text evidence="7">Belongs to the rhabdoviridae protein L family.</text>
</comment>
<organism>
    <name type="scientific">Isfahan virus</name>
    <name type="common">ISFV</name>
    <dbReference type="NCBI Taxonomy" id="290008"/>
    <lineage>
        <taxon>Viruses</taxon>
        <taxon>Riboviria</taxon>
        <taxon>Orthornavirae</taxon>
        <taxon>Negarnaviricota</taxon>
        <taxon>Haploviricotina</taxon>
        <taxon>Monjiviricetes</taxon>
        <taxon>Mononegavirales</taxon>
        <taxon>Rhabdoviridae</taxon>
        <taxon>Alpharhabdovirinae</taxon>
        <taxon>Vesiculovirus</taxon>
        <taxon>Vesiculovirus isfahan</taxon>
    </lineage>
</organism>
<proteinExistence type="inferred from homology"/>
<reference key="1">
    <citation type="journal article" date="2005" name="Arch. Virol.">
        <title>Complete genome sequences of Chandipura and Isfahan vesiculoviruses.</title>
        <authorList>
            <person name="Marriott A.C."/>
        </authorList>
    </citation>
    <scope>NUCLEOTIDE SEQUENCE [GENOMIC RNA]</scope>
</reference>
<dbReference type="EC" id="2.7.7.48" evidence="1"/>
<dbReference type="EC" id="3.6.1.-" evidence="2"/>
<dbReference type="EC" id="2.7.7.88" evidence="1"/>
<dbReference type="EC" id="2.1.1.375" evidence="1"/>
<dbReference type="EMBL" id="AJ810084">
    <property type="protein sequence ID" value="CAH17548.1"/>
    <property type="molecule type" value="Genomic_RNA"/>
</dbReference>
<dbReference type="RefSeq" id="YP_007641386.1">
    <property type="nucleotide sequence ID" value="NC_020806.1"/>
</dbReference>
<dbReference type="SMR" id="Q5K2K3"/>
<dbReference type="GeneID" id="14857914"/>
<dbReference type="KEGG" id="vg:14857914"/>
<dbReference type="Proteomes" id="UP000204017">
    <property type="component" value="Genome"/>
</dbReference>
<dbReference type="GO" id="GO:0030430">
    <property type="term" value="C:host cell cytoplasm"/>
    <property type="evidence" value="ECO:0007669"/>
    <property type="project" value="UniProtKB-SubCell"/>
</dbReference>
<dbReference type="GO" id="GO:0044423">
    <property type="term" value="C:virion component"/>
    <property type="evidence" value="ECO:0007669"/>
    <property type="project" value="UniProtKB-KW"/>
</dbReference>
<dbReference type="GO" id="GO:0005524">
    <property type="term" value="F:ATP binding"/>
    <property type="evidence" value="ECO:0007669"/>
    <property type="project" value="UniProtKB-KW"/>
</dbReference>
<dbReference type="GO" id="GO:0003924">
    <property type="term" value="F:GTPase activity"/>
    <property type="evidence" value="ECO:0007669"/>
    <property type="project" value="RHEA"/>
</dbReference>
<dbReference type="GO" id="GO:0004482">
    <property type="term" value="F:mRNA 5'-cap (guanine-N7-)-methyltransferase activity"/>
    <property type="evidence" value="ECO:0007669"/>
    <property type="project" value="InterPro"/>
</dbReference>
<dbReference type="GO" id="GO:0003968">
    <property type="term" value="F:RNA-directed RNA polymerase activity"/>
    <property type="evidence" value="ECO:0007669"/>
    <property type="project" value="UniProtKB-KW"/>
</dbReference>
<dbReference type="GO" id="GO:0039689">
    <property type="term" value="P:negative stranded viral RNA replication"/>
    <property type="evidence" value="ECO:0000250"/>
    <property type="project" value="UniProtKB"/>
</dbReference>
<dbReference type="FunFam" id="3.40.50.150:FF:000473">
    <property type="entry name" value="RNA-directed RNA polymerase L"/>
    <property type="match status" value="1"/>
</dbReference>
<dbReference type="Gene3D" id="3.40.50.150">
    <property type="entry name" value="Vaccinia Virus protein VP39"/>
    <property type="match status" value="1"/>
</dbReference>
<dbReference type="InterPro" id="IPR039530">
    <property type="entry name" value="L_methyltransferase_rhabdo"/>
</dbReference>
<dbReference type="InterPro" id="IPR039736">
    <property type="entry name" value="L_poly_C"/>
</dbReference>
<dbReference type="InterPro" id="IPR048398">
    <property type="entry name" value="Methyltrans_Mon_C"/>
</dbReference>
<dbReference type="InterPro" id="IPR048397">
    <property type="entry name" value="Methyltrans_Mon_CD"/>
</dbReference>
<dbReference type="InterPro" id="IPR026890">
    <property type="entry name" value="Mononeg_mRNAcap"/>
</dbReference>
<dbReference type="InterPro" id="IPR014023">
    <property type="entry name" value="Mononeg_RNA_pol_cat"/>
</dbReference>
<dbReference type="InterPro" id="IPR025786">
    <property type="entry name" value="Mononega_L_MeTrfase"/>
</dbReference>
<dbReference type="InterPro" id="IPR017234">
    <property type="entry name" value="RNA-dir_pol_rhabdovirus"/>
</dbReference>
<dbReference type="InterPro" id="IPR029063">
    <property type="entry name" value="SAM-dependent_MTases_sf"/>
</dbReference>
<dbReference type="NCBIfam" id="TIGR04198">
    <property type="entry name" value="paramyx_RNAcap"/>
    <property type="match status" value="1"/>
</dbReference>
<dbReference type="Pfam" id="PF21080">
    <property type="entry name" value="Methyltrans_Mon_1st"/>
    <property type="match status" value="1"/>
</dbReference>
<dbReference type="Pfam" id="PF14314">
    <property type="entry name" value="Methyltrans_Mon_2nd"/>
    <property type="match status" value="1"/>
</dbReference>
<dbReference type="Pfam" id="PF21081">
    <property type="entry name" value="Methyltrans_Mon_3rd"/>
    <property type="match status" value="1"/>
</dbReference>
<dbReference type="Pfam" id="PF14318">
    <property type="entry name" value="Mononeg_mRNAcap"/>
    <property type="match status" value="1"/>
</dbReference>
<dbReference type="Pfam" id="PF00946">
    <property type="entry name" value="Mononeg_RNA_pol"/>
    <property type="match status" value="1"/>
</dbReference>
<dbReference type="PIRSF" id="PIRSF037546">
    <property type="entry name" value="RNA_pol_RhabdoV_sub"/>
    <property type="match status" value="1"/>
</dbReference>
<dbReference type="PROSITE" id="PS50526">
    <property type="entry name" value="RDRP_SSRNA_NEG_NONSEG"/>
    <property type="match status" value="1"/>
</dbReference>
<dbReference type="PROSITE" id="PS51590">
    <property type="entry name" value="SAM_MT_MNV_L"/>
    <property type="match status" value="1"/>
</dbReference>
<protein>
    <recommendedName>
        <fullName>RNA-directed RNA polymerase L</fullName>
        <shortName>Protein L</shortName>
    </recommendedName>
    <alternativeName>
        <fullName>Large structural protein</fullName>
    </alternativeName>
    <alternativeName>
        <fullName>Replicase</fullName>
    </alternativeName>
    <alternativeName>
        <fullName>Transcriptase</fullName>
    </alternativeName>
    <domain>
        <recommendedName>
            <fullName>RNA-directed RNA polymerase</fullName>
            <ecNumber evidence="1">2.7.7.48</ecNumber>
        </recommendedName>
    </domain>
    <domain>
        <recommendedName>
            <fullName evidence="2">GTP phosphohydrolase</fullName>
            <ecNumber evidence="2">3.6.1.-</ecNumber>
        </recommendedName>
    </domain>
    <domain>
        <recommendedName>
            <fullName>GDP polyribonucleotidyltransferase</fullName>
            <ecNumber evidence="1">2.7.7.88</ecNumber>
        </recommendedName>
        <alternativeName>
            <fullName evidence="7">PRNTase</fullName>
        </alternativeName>
    </domain>
    <domain>
        <recommendedName>
            <fullName evidence="7">mRNA cap methyltransferase</fullName>
            <ecNumber evidence="1">2.1.1.375</ecNumber>
        </recommendedName>
        <alternativeName>
            <fullName evidence="1">mRNA (guanine-N(7)-)-methyltransferase</fullName>
            <shortName evidence="1">G-N7-MTase</shortName>
        </alternativeName>
        <alternativeName>
            <fullName evidence="1">mRNA (nucleoside-2'-O-)-methyltransferase</fullName>
            <shortName evidence="1">N1-2'-O-MTase</shortName>
        </alternativeName>
    </domain>
</protein>
<evidence type="ECO:0000250" key="1">
    <source>
        <dbReference type="UniProtKB" id="P03523"/>
    </source>
</evidence>
<evidence type="ECO:0000250" key="2">
    <source>
        <dbReference type="UniProtKB" id="P28887"/>
    </source>
</evidence>
<evidence type="ECO:0000255" key="3"/>
<evidence type="ECO:0000255" key="4">
    <source>
        <dbReference type="PROSITE-ProRule" id="PRU00539"/>
    </source>
</evidence>
<evidence type="ECO:0000255" key="5">
    <source>
        <dbReference type="PROSITE-ProRule" id="PRU00923"/>
    </source>
</evidence>
<evidence type="ECO:0000256" key="6">
    <source>
        <dbReference type="SAM" id="MobiDB-lite"/>
    </source>
</evidence>
<evidence type="ECO:0000305" key="7"/>
<keyword id="KW-0067">ATP-binding</keyword>
<keyword id="KW-1035">Host cytoplasm</keyword>
<keyword id="KW-0378">Hydrolase</keyword>
<keyword id="KW-0489">Methyltransferase</keyword>
<keyword id="KW-0506">mRNA capping</keyword>
<keyword id="KW-0507">mRNA processing</keyword>
<keyword id="KW-0511">Multifunctional enzyme</keyword>
<keyword id="KW-0547">Nucleotide-binding</keyword>
<keyword id="KW-0548">Nucleotidyltransferase</keyword>
<keyword id="KW-0696">RNA-directed RNA polymerase</keyword>
<keyword id="KW-0949">S-adenosyl-L-methionine</keyword>
<keyword id="KW-0808">Transferase</keyword>
<keyword id="KW-0693">Viral RNA replication</keyword>
<keyword id="KW-0946">Virion</keyword>